<evidence type="ECO:0000250" key="1"/>
<evidence type="ECO:0000250" key="2">
    <source>
        <dbReference type="UniProtKB" id="Q9ZW27"/>
    </source>
</evidence>
<evidence type="ECO:0000305" key="3"/>
<sequence length="225" mass="25941">MAEKEEGVKLIGSWASPFSRRVEMALKLKGVPYDYLDEDYLVVKSPLLLQLNPVYKKVPVLVHNGKILPESQLILEYIDQTWTNNPILPQSPYDKAMARFWAKFVDEQVTMIGLRSLVKSEKRIDVAIEEVQELIMLLENQITGKKLFGGETIGFLDMVVGSMIPFCLARAWEGMGIDMIPEEKFPELNRWIKNLKEIEIVRECIPDREKHIEHMMKIVGRIKAV</sequence>
<protein>
    <recommendedName>
        <fullName>Glutathione S-transferase U3</fullName>
        <shortName>AtGSTU3</shortName>
        <ecNumber>2.5.1.18</ecNumber>
    </recommendedName>
    <alternativeName>
        <fullName>GST class-tau member 3</fullName>
    </alternativeName>
    <alternativeName>
        <fullName>Glutathione S-transferase 21</fullName>
    </alternativeName>
</protein>
<reference key="1">
    <citation type="journal article" date="2002" name="Plant Mol. Biol.">
        <title>Probing the diversity of the Arabidopsis glutathione S-transferase gene family.</title>
        <authorList>
            <person name="Wagner U."/>
            <person name="Edwards R."/>
            <person name="Dixon D.P."/>
            <person name="Mauch F."/>
        </authorList>
    </citation>
    <scope>NUCLEOTIDE SEQUENCE [MRNA]</scope>
    <scope>GENE FAMILY</scope>
    <scope>NOMENCLATURE</scope>
    <source>
        <strain>cv. Columbia</strain>
    </source>
</reference>
<reference key="2">
    <citation type="journal article" date="1999" name="Nature">
        <title>Sequence and analysis of chromosome 2 of the plant Arabidopsis thaliana.</title>
        <authorList>
            <person name="Lin X."/>
            <person name="Kaul S."/>
            <person name="Rounsley S.D."/>
            <person name="Shea T.P."/>
            <person name="Benito M.-I."/>
            <person name="Town C.D."/>
            <person name="Fujii C.Y."/>
            <person name="Mason T.M."/>
            <person name="Bowman C.L."/>
            <person name="Barnstead M.E."/>
            <person name="Feldblyum T.V."/>
            <person name="Buell C.R."/>
            <person name="Ketchum K.A."/>
            <person name="Lee J.J."/>
            <person name="Ronning C.M."/>
            <person name="Koo H.L."/>
            <person name="Moffat K.S."/>
            <person name="Cronin L.A."/>
            <person name="Shen M."/>
            <person name="Pai G."/>
            <person name="Van Aken S."/>
            <person name="Umayam L."/>
            <person name="Tallon L.J."/>
            <person name="Gill J.E."/>
            <person name="Adams M.D."/>
            <person name="Carrera A.J."/>
            <person name="Creasy T.H."/>
            <person name="Goodman H.M."/>
            <person name="Somerville C.R."/>
            <person name="Copenhaver G.P."/>
            <person name="Preuss D."/>
            <person name="Nierman W.C."/>
            <person name="White O."/>
            <person name="Eisen J.A."/>
            <person name="Salzberg S.L."/>
            <person name="Fraser C.M."/>
            <person name="Venter J.C."/>
        </authorList>
    </citation>
    <scope>NUCLEOTIDE SEQUENCE [LARGE SCALE GENOMIC DNA]</scope>
    <source>
        <strain>cv. Columbia</strain>
    </source>
</reference>
<reference key="3">
    <citation type="journal article" date="2017" name="Plant J.">
        <title>Araport11: a complete reannotation of the Arabidopsis thaliana reference genome.</title>
        <authorList>
            <person name="Cheng C.Y."/>
            <person name="Krishnakumar V."/>
            <person name="Chan A.P."/>
            <person name="Thibaud-Nissen F."/>
            <person name="Schobel S."/>
            <person name="Town C.D."/>
        </authorList>
    </citation>
    <scope>GENOME REANNOTATION</scope>
    <source>
        <strain>cv. Columbia</strain>
    </source>
</reference>
<reference key="4">
    <citation type="journal article" date="2002" name="Science">
        <title>Functional annotation of a full-length Arabidopsis cDNA collection.</title>
        <authorList>
            <person name="Seki M."/>
            <person name="Narusaka M."/>
            <person name="Kamiya A."/>
            <person name="Ishida J."/>
            <person name="Satou M."/>
            <person name="Sakurai T."/>
            <person name="Nakajima M."/>
            <person name="Enju A."/>
            <person name="Akiyama K."/>
            <person name="Oono Y."/>
            <person name="Muramatsu M."/>
            <person name="Hayashizaki Y."/>
            <person name="Kawai J."/>
            <person name="Carninci P."/>
            <person name="Itoh M."/>
            <person name="Ishii Y."/>
            <person name="Arakawa T."/>
            <person name="Shibata K."/>
            <person name="Shinagawa A."/>
            <person name="Shinozaki K."/>
        </authorList>
    </citation>
    <scope>NUCLEOTIDE SEQUENCE [LARGE SCALE MRNA]</scope>
    <source>
        <strain>cv. Columbia</strain>
    </source>
</reference>
<gene>
    <name type="primary">GSTU3</name>
    <name type="synonym">GST21</name>
    <name type="ordered locus">At2g29470</name>
    <name type="ORF">F16P2.15</name>
</gene>
<dbReference type="EC" id="2.5.1.18"/>
<dbReference type="EMBL" id="AF288185">
    <property type="protein sequence ID" value="AAG30134.1"/>
    <property type="molecule type" value="mRNA"/>
</dbReference>
<dbReference type="EMBL" id="AC004561">
    <property type="protein sequence ID" value="AAC95191.1"/>
    <property type="molecule type" value="Genomic_DNA"/>
</dbReference>
<dbReference type="EMBL" id="CP002685">
    <property type="protein sequence ID" value="AEC08258.1"/>
    <property type="molecule type" value="Genomic_DNA"/>
</dbReference>
<dbReference type="EMBL" id="AK117612">
    <property type="protein sequence ID" value="BAC42268.1"/>
    <property type="molecule type" value="mRNA"/>
</dbReference>
<dbReference type="PIR" id="G84696">
    <property type="entry name" value="G84696"/>
</dbReference>
<dbReference type="RefSeq" id="NP_180508.1">
    <property type="nucleotide sequence ID" value="NM_128501.4"/>
</dbReference>
<dbReference type="SMR" id="Q9ZW28"/>
<dbReference type="FunCoup" id="Q9ZW28">
    <property type="interactions" value="127"/>
</dbReference>
<dbReference type="STRING" id="3702.Q9ZW28"/>
<dbReference type="PaxDb" id="3702-AT2G29470.1"/>
<dbReference type="ProteomicsDB" id="247260"/>
<dbReference type="EnsemblPlants" id="AT2G29470.1">
    <property type="protein sequence ID" value="AT2G29470.1"/>
    <property type="gene ID" value="AT2G29470"/>
</dbReference>
<dbReference type="GeneID" id="817496"/>
<dbReference type="Gramene" id="AT2G29470.1">
    <property type="protein sequence ID" value="AT2G29470.1"/>
    <property type="gene ID" value="AT2G29470"/>
</dbReference>
<dbReference type="KEGG" id="ath:AT2G29470"/>
<dbReference type="Araport" id="AT2G29470"/>
<dbReference type="TAIR" id="AT2G29470">
    <property type="gene designation" value="GSTU3"/>
</dbReference>
<dbReference type="eggNOG" id="KOG0406">
    <property type="taxonomic scope" value="Eukaryota"/>
</dbReference>
<dbReference type="HOGENOM" id="CLU_011226_18_1_1"/>
<dbReference type="InParanoid" id="Q9ZW28"/>
<dbReference type="OMA" id="MDEDYLV"/>
<dbReference type="OrthoDB" id="202840at2759"/>
<dbReference type="PhylomeDB" id="Q9ZW28"/>
<dbReference type="BioCyc" id="ARA:AT2G29470-MONOMER"/>
<dbReference type="BRENDA" id="2.5.1.18">
    <property type="organism ID" value="399"/>
</dbReference>
<dbReference type="PRO" id="PR:Q9ZW28"/>
<dbReference type="Proteomes" id="UP000006548">
    <property type="component" value="Chromosome 2"/>
</dbReference>
<dbReference type="ExpressionAtlas" id="Q9ZW28">
    <property type="expression patterns" value="baseline and differential"/>
</dbReference>
<dbReference type="GO" id="GO:0005737">
    <property type="term" value="C:cytoplasm"/>
    <property type="evidence" value="ECO:0000303"/>
    <property type="project" value="TAIR"/>
</dbReference>
<dbReference type="GO" id="GO:0005829">
    <property type="term" value="C:cytosol"/>
    <property type="evidence" value="ECO:0007669"/>
    <property type="project" value="UniProtKB-SubCell"/>
</dbReference>
<dbReference type="GO" id="GO:0004364">
    <property type="term" value="F:glutathione transferase activity"/>
    <property type="evidence" value="ECO:0007669"/>
    <property type="project" value="UniProtKB-EC"/>
</dbReference>
<dbReference type="GO" id="GO:0006749">
    <property type="term" value="P:glutathione metabolic process"/>
    <property type="evidence" value="ECO:0007669"/>
    <property type="project" value="InterPro"/>
</dbReference>
<dbReference type="GO" id="GO:0009407">
    <property type="term" value="P:toxin catabolic process"/>
    <property type="evidence" value="ECO:0000304"/>
    <property type="project" value="TAIR"/>
</dbReference>
<dbReference type="CDD" id="cd03185">
    <property type="entry name" value="GST_C_Tau"/>
    <property type="match status" value="1"/>
</dbReference>
<dbReference type="CDD" id="cd03058">
    <property type="entry name" value="GST_N_Tau"/>
    <property type="match status" value="1"/>
</dbReference>
<dbReference type="FunFam" id="1.20.1050.10:FF:000012">
    <property type="entry name" value="Tau class glutathione S-transferase"/>
    <property type="match status" value="1"/>
</dbReference>
<dbReference type="FunFam" id="3.40.30.10:FF:000014">
    <property type="entry name" value="Tau class glutathione S-transferase"/>
    <property type="match status" value="1"/>
</dbReference>
<dbReference type="Gene3D" id="1.20.1050.10">
    <property type="match status" value="1"/>
</dbReference>
<dbReference type="Gene3D" id="3.40.30.10">
    <property type="entry name" value="Glutaredoxin"/>
    <property type="match status" value="1"/>
</dbReference>
<dbReference type="InterPro" id="IPR010987">
    <property type="entry name" value="Glutathione-S-Trfase_C-like"/>
</dbReference>
<dbReference type="InterPro" id="IPR036282">
    <property type="entry name" value="Glutathione-S-Trfase_C_sf"/>
</dbReference>
<dbReference type="InterPro" id="IPR004045">
    <property type="entry name" value="Glutathione_S-Trfase_N"/>
</dbReference>
<dbReference type="InterPro" id="IPR004046">
    <property type="entry name" value="GST_C"/>
</dbReference>
<dbReference type="InterPro" id="IPR045074">
    <property type="entry name" value="GST_C_Tau"/>
</dbReference>
<dbReference type="InterPro" id="IPR045073">
    <property type="entry name" value="Omega/Tau-like"/>
</dbReference>
<dbReference type="InterPro" id="IPR036249">
    <property type="entry name" value="Thioredoxin-like_sf"/>
</dbReference>
<dbReference type="PANTHER" id="PTHR11260:SF591">
    <property type="entry name" value="GLUTATHIONE S-TRANSFERASE U3"/>
    <property type="match status" value="1"/>
</dbReference>
<dbReference type="PANTHER" id="PTHR11260">
    <property type="entry name" value="GLUTATHIONE S-TRANSFERASE, GST, SUPERFAMILY, GST DOMAIN CONTAINING"/>
    <property type="match status" value="1"/>
</dbReference>
<dbReference type="Pfam" id="PF00043">
    <property type="entry name" value="GST_C"/>
    <property type="match status" value="1"/>
</dbReference>
<dbReference type="Pfam" id="PF13417">
    <property type="entry name" value="GST_N_3"/>
    <property type="match status" value="1"/>
</dbReference>
<dbReference type="SFLD" id="SFLDG01152">
    <property type="entry name" value="Main.3:_Omega-_and_Tau-like"/>
    <property type="match status" value="1"/>
</dbReference>
<dbReference type="SFLD" id="SFLDG00358">
    <property type="entry name" value="Main_(cytGST)"/>
    <property type="match status" value="1"/>
</dbReference>
<dbReference type="SUPFAM" id="SSF47616">
    <property type="entry name" value="GST C-terminal domain-like"/>
    <property type="match status" value="1"/>
</dbReference>
<dbReference type="SUPFAM" id="SSF52833">
    <property type="entry name" value="Thioredoxin-like"/>
    <property type="match status" value="1"/>
</dbReference>
<dbReference type="PROSITE" id="PS50405">
    <property type="entry name" value="GST_CTER"/>
    <property type="match status" value="1"/>
</dbReference>
<dbReference type="PROSITE" id="PS50404">
    <property type="entry name" value="GST_NTER"/>
    <property type="match status" value="1"/>
</dbReference>
<organism>
    <name type="scientific">Arabidopsis thaliana</name>
    <name type="common">Mouse-ear cress</name>
    <dbReference type="NCBI Taxonomy" id="3702"/>
    <lineage>
        <taxon>Eukaryota</taxon>
        <taxon>Viridiplantae</taxon>
        <taxon>Streptophyta</taxon>
        <taxon>Embryophyta</taxon>
        <taxon>Tracheophyta</taxon>
        <taxon>Spermatophyta</taxon>
        <taxon>Magnoliopsida</taxon>
        <taxon>eudicotyledons</taxon>
        <taxon>Gunneridae</taxon>
        <taxon>Pentapetalae</taxon>
        <taxon>rosids</taxon>
        <taxon>malvids</taxon>
        <taxon>Brassicales</taxon>
        <taxon>Brassicaceae</taxon>
        <taxon>Camelineae</taxon>
        <taxon>Arabidopsis</taxon>
    </lineage>
</organism>
<keyword id="KW-0963">Cytoplasm</keyword>
<keyword id="KW-0216">Detoxification</keyword>
<keyword id="KW-0597">Phosphoprotein</keyword>
<keyword id="KW-1185">Reference proteome</keyword>
<keyword id="KW-0808">Transferase</keyword>
<feature type="chain" id="PRO_0000413550" description="Glutathione S-transferase U3">
    <location>
        <begin position="1"/>
        <end position="225"/>
    </location>
</feature>
<feature type="domain" description="GST N-terminal">
    <location>
        <begin position="6"/>
        <end position="86"/>
    </location>
</feature>
<feature type="domain" description="GST C-terminal">
    <location>
        <begin position="91"/>
        <end position="218"/>
    </location>
</feature>
<feature type="binding site" evidence="1">
    <location>
        <begin position="16"/>
        <end position="17"/>
    </location>
    <ligand>
        <name>glutathione</name>
        <dbReference type="ChEBI" id="CHEBI:57925"/>
    </ligand>
</feature>
<feature type="binding site" evidence="1">
    <location>
        <begin position="43"/>
        <end position="44"/>
    </location>
    <ligand>
        <name>glutathione</name>
        <dbReference type="ChEBI" id="CHEBI:57925"/>
    </ligand>
</feature>
<feature type="binding site" evidence="1">
    <location>
        <begin position="57"/>
        <end position="58"/>
    </location>
    <ligand>
        <name>glutathione</name>
        <dbReference type="ChEBI" id="CHEBI:57925"/>
    </ligand>
</feature>
<feature type="binding site" evidence="1">
    <location>
        <begin position="70"/>
        <end position="71"/>
    </location>
    <ligand>
        <name>glutathione</name>
        <dbReference type="ChEBI" id="CHEBI:57925"/>
    </ligand>
</feature>
<feature type="modified residue" description="Phosphothreonine" evidence="2">
    <location>
        <position position="152"/>
    </location>
</feature>
<proteinExistence type="evidence at transcript level"/>
<accession>Q9ZW28</accession>
<name>GSTU3_ARATH</name>
<comment type="function">
    <text evidence="1">May be involved in the conjugation of reduced glutathione to a wide number of exogenous and endogenous hydrophobic electrophiles and have a detoxification role against certain herbicides.</text>
</comment>
<comment type="catalytic activity">
    <reaction>
        <text>RX + glutathione = an S-substituted glutathione + a halide anion + H(+)</text>
        <dbReference type="Rhea" id="RHEA:16437"/>
        <dbReference type="ChEBI" id="CHEBI:15378"/>
        <dbReference type="ChEBI" id="CHEBI:16042"/>
        <dbReference type="ChEBI" id="CHEBI:17792"/>
        <dbReference type="ChEBI" id="CHEBI:57925"/>
        <dbReference type="ChEBI" id="CHEBI:90779"/>
        <dbReference type="EC" id="2.5.1.18"/>
    </reaction>
</comment>
<comment type="subcellular location">
    <subcellularLocation>
        <location evidence="3">Cytoplasm</location>
        <location evidence="3">Cytosol</location>
    </subcellularLocation>
</comment>
<comment type="similarity">
    <text evidence="3">Belongs to the GST superfamily. Tau family.</text>
</comment>